<dbReference type="EMBL" id="CP000868">
    <property type="protein sequence ID" value="ABX13975.1"/>
    <property type="molecule type" value="Genomic_DNA"/>
</dbReference>
<dbReference type="EMBL" id="AP009385">
    <property type="protein sequence ID" value="BAG44859.1"/>
    <property type="molecule type" value="Genomic_DNA"/>
</dbReference>
<dbReference type="SMR" id="A9ADM4"/>
<dbReference type="STRING" id="395019.BMULJ_02974"/>
<dbReference type="KEGG" id="bmj:BMULJ_02974"/>
<dbReference type="KEGG" id="bmu:Bmul_0280"/>
<dbReference type="eggNOG" id="COG0218">
    <property type="taxonomic scope" value="Bacteria"/>
</dbReference>
<dbReference type="HOGENOM" id="CLU_033732_1_1_4"/>
<dbReference type="Proteomes" id="UP000008815">
    <property type="component" value="Chromosome 1"/>
</dbReference>
<dbReference type="GO" id="GO:0005829">
    <property type="term" value="C:cytosol"/>
    <property type="evidence" value="ECO:0007669"/>
    <property type="project" value="TreeGrafter"/>
</dbReference>
<dbReference type="GO" id="GO:0005525">
    <property type="term" value="F:GTP binding"/>
    <property type="evidence" value="ECO:0007669"/>
    <property type="project" value="UniProtKB-UniRule"/>
</dbReference>
<dbReference type="GO" id="GO:0046872">
    <property type="term" value="F:metal ion binding"/>
    <property type="evidence" value="ECO:0007669"/>
    <property type="project" value="UniProtKB-KW"/>
</dbReference>
<dbReference type="GO" id="GO:0000917">
    <property type="term" value="P:division septum assembly"/>
    <property type="evidence" value="ECO:0007669"/>
    <property type="project" value="UniProtKB-KW"/>
</dbReference>
<dbReference type="CDD" id="cd01876">
    <property type="entry name" value="YihA_EngB"/>
    <property type="match status" value="1"/>
</dbReference>
<dbReference type="FunFam" id="3.40.50.300:FF:000098">
    <property type="entry name" value="Probable GTP-binding protein EngB"/>
    <property type="match status" value="1"/>
</dbReference>
<dbReference type="Gene3D" id="3.40.50.300">
    <property type="entry name" value="P-loop containing nucleotide triphosphate hydrolases"/>
    <property type="match status" value="1"/>
</dbReference>
<dbReference type="HAMAP" id="MF_00321">
    <property type="entry name" value="GTPase_EngB"/>
    <property type="match status" value="1"/>
</dbReference>
<dbReference type="InterPro" id="IPR030393">
    <property type="entry name" value="G_ENGB_dom"/>
</dbReference>
<dbReference type="InterPro" id="IPR006073">
    <property type="entry name" value="GTP-bd"/>
</dbReference>
<dbReference type="InterPro" id="IPR019987">
    <property type="entry name" value="GTP-bd_ribosome_bio_YsxC"/>
</dbReference>
<dbReference type="InterPro" id="IPR027417">
    <property type="entry name" value="P-loop_NTPase"/>
</dbReference>
<dbReference type="NCBIfam" id="TIGR03598">
    <property type="entry name" value="GTPase_YsxC"/>
    <property type="match status" value="1"/>
</dbReference>
<dbReference type="PANTHER" id="PTHR11649:SF13">
    <property type="entry name" value="ENGB-TYPE G DOMAIN-CONTAINING PROTEIN"/>
    <property type="match status" value="1"/>
</dbReference>
<dbReference type="PANTHER" id="PTHR11649">
    <property type="entry name" value="MSS1/TRME-RELATED GTP-BINDING PROTEIN"/>
    <property type="match status" value="1"/>
</dbReference>
<dbReference type="Pfam" id="PF01926">
    <property type="entry name" value="MMR_HSR1"/>
    <property type="match status" value="1"/>
</dbReference>
<dbReference type="SUPFAM" id="SSF52540">
    <property type="entry name" value="P-loop containing nucleoside triphosphate hydrolases"/>
    <property type="match status" value="1"/>
</dbReference>
<dbReference type="PROSITE" id="PS51706">
    <property type="entry name" value="G_ENGB"/>
    <property type="match status" value="1"/>
</dbReference>
<protein>
    <recommendedName>
        <fullName evidence="1">Probable GTP-binding protein EngB</fullName>
    </recommendedName>
</protein>
<name>ENGB_BURM1</name>
<gene>
    <name evidence="1" type="primary">engB</name>
    <name type="ordered locus">Bmul_0280</name>
    <name type="ordered locus">BMULJ_02974</name>
</gene>
<feature type="chain" id="PRO_1000115957" description="Probable GTP-binding protein EngB">
    <location>
        <begin position="1"/>
        <end position="219"/>
    </location>
</feature>
<feature type="domain" description="EngB-type G" evidence="1">
    <location>
        <begin position="24"/>
        <end position="207"/>
    </location>
</feature>
<feature type="binding site" evidence="1">
    <location>
        <begin position="32"/>
        <end position="39"/>
    </location>
    <ligand>
        <name>GTP</name>
        <dbReference type="ChEBI" id="CHEBI:37565"/>
    </ligand>
</feature>
<feature type="binding site" evidence="1">
    <location>
        <position position="39"/>
    </location>
    <ligand>
        <name>Mg(2+)</name>
        <dbReference type="ChEBI" id="CHEBI:18420"/>
    </ligand>
</feature>
<feature type="binding site" evidence="1">
    <location>
        <begin position="59"/>
        <end position="63"/>
    </location>
    <ligand>
        <name>GTP</name>
        <dbReference type="ChEBI" id="CHEBI:37565"/>
    </ligand>
</feature>
<feature type="binding site" evidence="1">
    <location>
        <position position="61"/>
    </location>
    <ligand>
        <name>Mg(2+)</name>
        <dbReference type="ChEBI" id="CHEBI:18420"/>
    </ligand>
</feature>
<feature type="binding site" evidence="1">
    <location>
        <begin position="81"/>
        <end position="84"/>
    </location>
    <ligand>
        <name>GTP</name>
        <dbReference type="ChEBI" id="CHEBI:37565"/>
    </ligand>
</feature>
<feature type="binding site" evidence="1">
    <location>
        <begin position="148"/>
        <end position="151"/>
    </location>
    <ligand>
        <name>GTP</name>
        <dbReference type="ChEBI" id="CHEBI:37565"/>
    </ligand>
</feature>
<feature type="binding site" evidence="1">
    <location>
        <begin position="186"/>
        <end position="188"/>
    </location>
    <ligand>
        <name>GTP</name>
        <dbReference type="ChEBI" id="CHEBI:37565"/>
    </ligand>
</feature>
<evidence type="ECO:0000255" key="1">
    <source>
        <dbReference type="HAMAP-Rule" id="MF_00321"/>
    </source>
</evidence>
<organism>
    <name type="scientific">Burkholderia multivorans (strain ATCC 17616 / 249)</name>
    <dbReference type="NCBI Taxonomy" id="395019"/>
    <lineage>
        <taxon>Bacteria</taxon>
        <taxon>Pseudomonadati</taxon>
        <taxon>Pseudomonadota</taxon>
        <taxon>Betaproteobacteria</taxon>
        <taxon>Burkholderiales</taxon>
        <taxon>Burkholderiaceae</taxon>
        <taxon>Burkholderia</taxon>
        <taxon>Burkholderia cepacia complex</taxon>
    </lineage>
</organism>
<sequence length="219" mass="24329">MAFLLHQARFYTTVNHLRDLPPTVQPEIAFAGRSNAGKSTAINVLCNQKRLAFASKTPGRTQHINYFSVGPAAEPVANLVDLPGYGYAEVPGAAKAHWEMLLSTYLATRSQLCGLILMMDSRRPLTELDRRMIEWFAPTGKPIHTLLTKCDKLTRQESINALRTTQKGLDAYRDQGVQGKLTVQLFSALKRTGLDEAHALIESWVRPSVADEKNEPVAQ</sequence>
<comment type="function">
    <text evidence="1">Necessary for normal cell division and for the maintenance of normal septation.</text>
</comment>
<comment type="cofactor">
    <cofactor evidence="1">
        <name>Mg(2+)</name>
        <dbReference type="ChEBI" id="CHEBI:18420"/>
    </cofactor>
</comment>
<comment type="similarity">
    <text evidence="1">Belongs to the TRAFAC class TrmE-Era-EngA-EngB-Septin-like GTPase superfamily. EngB GTPase family.</text>
</comment>
<keyword id="KW-0131">Cell cycle</keyword>
<keyword id="KW-0132">Cell division</keyword>
<keyword id="KW-0342">GTP-binding</keyword>
<keyword id="KW-0460">Magnesium</keyword>
<keyword id="KW-0479">Metal-binding</keyword>
<keyword id="KW-0547">Nucleotide-binding</keyword>
<keyword id="KW-1185">Reference proteome</keyword>
<keyword id="KW-0717">Septation</keyword>
<accession>A9ADM4</accession>
<reference key="1">
    <citation type="submission" date="2007-10" db="EMBL/GenBank/DDBJ databases">
        <title>Complete sequence of chromosome 1 of Burkholderia multivorans ATCC 17616.</title>
        <authorList>
            <person name="Copeland A."/>
            <person name="Lucas S."/>
            <person name="Lapidus A."/>
            <person name="Barry K."/>
            <person name="Glavina del Rio T."/>
            <person name="Dalin E."/>
            <person name="Tice H."/>
            <person name="Pitluck S."/>
            <person name="Chain P."/>
            <person name="Malfatti S."/>
            <person name="Shin M."/>
            <person name="Vergez L."/>
            <person name="Schmutz J."/>
            <person name="Larimer F."/>
            <person name="Land M."/>
            <person name="Hauser L."/>
            <person name="Kyrpides N."/>
            <person name="Kim E."/>
            <person name="Tiedje J."/>
            <person name="Richardson P."/>
        </authorList>
    </citation>
    <scope>NUCLEOTIDE SEQUENCE [LARGE SCALE GENOMIC DNA]</scope>
    <source>
        <strain>ATCC 17616 / 249</strain>
    </source>
</reference>
<reference key="2">
    <citation type="submission" date="2007-04" db="EMBL/GenBank/DDBJ databases">
        <title>Complete genome sequence of Burkholderia multivorans ATCC 17616.</title>
        <authorList>
            <person name="Ohtsubo Y."/>
            <person name="Yamashita A."/>
            <person name="Kurokawa K."/>
            <person name="Takami H."/>
            <person name="Yuhara S."/>
            <person name="Nishiyama E."/>
            <person name="Endo R."/>
            <person name="Miyazaki R."/>
            <person name="Ono A."/>
            <person name="Yano K."/>
            <person name="Ito M."/>
            <person name="Sota M."/>
            <person name="Yuji N."/>
            <person name="Hattori M."/>
            <person name="Tsuda M."/>
        </authorList>
    </citation>
    <scope>NUCLEOTIDE SEQUENCE [LARGE SCALE GENOMIC DNA]</scope>
    <source>
        <strain>ATCC 17616 / 249</strain>
    </source>
</reference>
<proteinExistence type="inferred from homology"/>